<feature type="chain" id="PRO_0000291055" description="UPF0434 protein azo1471">
    <location>
        <begin position="1"/>
        <end position="62"/>
    </location>
</feature>
<comment type="similarity">
    <text evidence="1">Belongs to the UPF0434 family.</text>
</comment>
<keyword id="KW-1185">Reference proteome</keyword>
<accession>A1K5I3</accession>
<name>Y1471_AZOSB</name>
<dbReference type="EMBL" id="AM406670">
    <property type="protein sequence ID" value="CAL94088.1"/>
    <property type="molecule type" value="Genomic_DNA"/>
</dbReference>
<dbReference type="RefSeq" id="WP_011765204.1">
    <property type="nucleotide sequence ID" value="NC_008702.1"/>
</dbReference>
<dbReference type="SMR" id="A1K5I3"/>
<dbReference type="STRING" id="62928.azo1471"/>
<dbReference type="KEGG" id="aoa:dqs_1594"/>
<dbReference type="KEGG" id="azo:azo1471"/>
<dbReference type="eggNOG" id="COG2835">
    <property type="taxonomic scope" value="Bacteria"/>
</dbReference>
<dbReference type="HOGENOM" id="CLU_155659_3_1_4"/>
<dbReference type="OrthoDB" id="9812205at2"/>
<dbReference type="Proteomes" id="UP000002588">
    <property type="component" value="Chromosome"/>
</dbReference>
<dbReference type="GO" id="GO:0005829">
    <property type="term" value="C:cytosol"/>
    <property type="evidence" value="ECO:0007669"/>
    <property type="project" value="TreeGrafter"/>
</dbReference>
<dbReference type="FunFam" id="2.20.25.10:FF:000002">
    <property type="entry name" value="UPF0434 protein YcaR"/>
    <property type="match status" value="1"/>
</dbReference>
<dbReference type="Gene3D" id="2.20.25.10">
    <property type="match status" value="1"/>
</dbReference>
<dbReference type="HAMAP" id="MF_01187">
    <property type="entry name" value="UPF0434"/>
    <property type="match status" value="1"/>
</dbReference>
<dbReference type="InterPro" id="IPR005651">
    <property type="entry name" value="Trm112-like"/>
</dbReference>
<dbReference type="PANTHER" id="PTHR33505:SF4">
    <property type="entry name" value="PROTEIN PREY, MITOCHONDRIAL"/>
    <property type="match status" value="1"/>
</dbReference>
<dbReference type="PANTHER" id="PTHR33505">
    <property type="entry name" value="ZGC:162634"/>
    <property type="match status" value="1"/>
</dbReference>
<dbReference type="Pfam" id="PF03966">
    <property type="entry name" value="Trm112p"/>
    <property type="match status" value="1"/>
</dbReference>
<dbReference type="SUPFAM" id="SSF158997">
    <property type="entry name" value="Trm112p-like"/>
    <property type="match status" value="1"/>
</dbReference>
<protein>
    <recommendedName>
        <fullName evidence="1">UPF0434 protein azo1471</fullName>
    </recommendedName>
</protein>
<organism>
    <name type="scientific">Azoarcus sp. (strain BH72)</name>
    <dbReference type="NCBI Taxonomy" id="418699"/>
    <lineage>
        <taxon>Bacteria</taxon>
        <taxon>Pseudomonadati</taxon>
        <taxon>Pseudomonadota</taxon>
        <taxon>Betaproteobacteria</taxon>
        <taxon>Rhodocyclales</taxon>
        <taxon>Zoogloeaceae</taxon>
        <taxon>Azoarcus</taxon>
    </lineage>
</organism>
<reference key="1">
    <citation type="journal article" date="2006" name="Nat. Biotechnol.">
        <title>Complete genome of the mutualistic, N2-fixing grass endophyte Azoarcus sp. strain BH72.</title>
        <authorList>
            <person name="Krause A."/>
            <person name="Ramakumar A."/>
            <person name="Bartels D."/>
            <person name="Battistoni F."/>
            <person name="Bekel T."/>
            <person name="Boch J."/>
            <person name="Boehm M."/>
            <person name="Friedrich F."/>
            <person name="Hurek T."/>
            <person name="Krause L."/>
            <person name="Linke B."/>
            <person name="McHardy A.C."/>
            <person name="Sarkar A."/>
            <person name="Schneiker S."/>
            <person name="Syed A.A."/>
            <person name="Thauer R."/>
            <person name="Vorhoelter F.-J."/>
            <person name="Weidner S."/>
            <person name="Puehler A."/>
            <person name="Reinhold-Hurek B."/>
            <person name="Kaiser O."/>
            <person name="Goesmann A."/>
        </authorList>
    </citation>
    <scope>NUCLEOTIDE SEQUENCE [LARGE SCALE GENOMIC DNA]</scope>
    <source>
        <strain>BH72</strain>
    </source>
</reference>
<sequence>MDARLLEILVCPLCKGPLDYLKDKQELVCKADRLAFPIRDGIPVMLEEEARALAAEDVDALR</sequence>
<proteinExistence type="inferred from homology"/>
<evidence type="ECO:0000255" key="1">
    <source>
        <dbReference type="HAMAP-Rule" id="MF_01187"/>
    </source>
</evidence>
<gene>
    <name type="ordered locus">azo1471</name>
</gene>